<accession>B2TJ39</accession>
<gene>
    <name evidence="1" type="primary">codY</name>
    <name type="ordered locus">CLL_A1257</name>
</gene>
<comment type="function">
    <text evidence="1">DNA-binding global transcriptional regulator which is involved in the adaptive response to starvation and acts by directly or indirectly controlling the expression of numerous genes in response to nutrient availability. During rapid exponential growth, CodY is highly active and represses genes whose products allow adaptation to nutrient depletion.</text>
</comment>
<comment type="subcellular location">
    <subcellularLocation>
        <location evidence="1">Cytoplasm</location>
    </subcellularLocation>
</comment>
<comment type="similarity">
    <text evidence="1">Belongs to the CodY family.</text>
</comment>
<keyword id="KW-0963">Cytoplasm</keyword>
<keyword id="KW-0238">DNA-binding</keyword>
<keyword id="KW-0678">Repressor</keyword>
<keyword id="KW-0804">Transcription</keyword>
<keyword id="KW-0805">Transcription regulation</keyword>
<protein>
    <recommendedName>
        <fullName evidence="1">Global transcriptional regulator CodY</fullName>
    </recommendedName>
</protein>
<proteinExistence type="inferred from homology"/>
<dbReference type="EMBL" id="CP001056">
    <property type="protein sequence ID" value="ACD23184.1"/>
    <property type="molecule type" value="Genomic_DNA"/>
</dbReference>
<dbReference type="SMR" id="B2TJ39"/>
<dbReference type="KEGG" id="cbk:CLL_A1257"/>
<dbReference type="PATRIC" id="fig|935198.13.peg.1203"/>
<dbReference type="HOGENOM" id="CLU_089581_0_0_9"/>
<dbReference type="Proteomes" id="UP000001195">
    <property type="component" value="Chromosome"/>
</dbReference>
<dbReference type="GO" id="GO:0005737">
    <property type="term" value="C:cytoplasm"/>
    <property type="evidence" value="ECO:0007669"/>
    <property type="project" value="UniProtKB-SubCell"/>
</dbReference>
<dbReference type="GO" id="GO:0003677">
    <property type="term" value="F:DNA binding"/>
    <property type="evidence" value="ECO:0007669"/>
    <property type="project" value="UniProtKB-UniRule"/>
</dbReference>
<dbReference type="GO" id="GO:0003700">
    <property type="term" value="F:DNA-binding transcription factor activity"/>
    <property type="evidence" value="ECO:0007669"/>
    <property type="project" value="InterPro"/>
</dbReference>
<dbReference type="GO" id="GO:0005525">
    <property type="term" value="F:GTP binding"/>
    <property type="evidence" value="ECO:0007669"/>
    <property type="project" value="InterPro"/>
</dbReference>
<dbReference type="GO" id="GO:0045892">
    <property type="term" value="P:negative regulation of DNA-templated transcription"/>
    <property type="evidence" value="ECO:0007669"/>
    <property type="project" value="UniProtKB-UniRule"/>
</dbReference>
<dbReference type="FunFam" id="1.10.10.10:FF:000034">
    <property type="entry name" value="GTP-sensing transcriptional pleiotropic repressor CodY"/>
    <property type="match status" value="1"/>
</dbReference>
<dbReference type="Gene3D" id="3.30.450.40">
    <property type="match status" value="1"/>
</dbReference>
<dbReference type="Gene3D" id="1.10.10.10">
    <property type="entry name" value="Winged helix-like DNA-binding domain superfamily/Winged helix DNA-binding domain"/>
    <property type="match status" value="1"/>
</dbReference>
<dbReference type="HAMAP" id="MF_00621">
    <property type="entry name" value="HTH_type_CodY"/>
    <property type="match status" value="1"/>
</dbReference>
<dbReference type="InterPro" id="IPR014154">
    <property type="entry name" value="CodY"/>
</dbReference>
<dbReference type="InterPro" id="IPR029016">
    <property type="entry name" value="GAF-like_dom_sf"/>
</dbReference>
<dbReference type="InterPro" id="IPR013198">
    <property type="entry name" value="GTP_trans_reg_CodY_C"/>
</dbReference>
<dbReference type="InterPro" id="IPR010312">
    <property type="entry name" value="Transc_reg_CodY_N"/>
</dbReference>
<dbReference type="InterPro" id="IPR036388">
    <property type="entry name" value="WH-like_DNA-bd_sf"/>
</dbReference>
<dbReference type="InterPro" id="IPR036390">
    <property type="entry name" value="WH_DNA-bd_sf"/>
</dbReference>
<dbReference type="NCBIfam" id="TIGR02787">
    <property type="entry name" value="codY_Gpos"/>
    <property type="match status" value="1"/>
</dbReference>
<dbReference type="NCBIfam" id="NF003170">
    <property type="entry name" value="PRK04158.1"/>
    <property type="match status" value="1"/>
</dbReference>
<dbReference type="PANTHER" id="PTHR40062:SF1">
    <property type="entry name" value="GLOBAL TRANSCRIPTIONAL REGULATOR CODY"/>
    <property type="match status" value="1"/>
</dbReference>
<dbReference type="PANTHER" id="PTHR40062">
    <property type="entry name" value="GTP-SENSING TRANSCRIPTIONAL PLEIOTROPIC REPRESSOR CODY"/>
    <property type="match status" value="1"/>
</dbReference>
<dbReference type="Pfam" id="PF06018">
    <property type="entry name" value="CodY"/>
    <property type="match status" value="1"/>
</dbReference>
<dbReference type="Pfam" id="PF08222">
    <property type="entry name" value="HTH_CodY"/>
    <property type="match status" value="1"/>
</dbReference>
<dbReference type="PIRSF" id="PIRSF011572">
    <property type="entry name" value="GTP_sensing_CodY"/>
    <property type="match status" value="1"/>
</dbReference>
<dbReference type="SUPFAM" id="SSF46785">
    <property type="entry name" value="Winged helix' DNA-binding domain"/>
    <property type="match status" value="1"/>
</dbReference>
<evidence type="ECO:0000255" key="1">
    <source>
        <dbReference type="HAMAP-Rule" id="MF_00621"/>
    </source>
</evidence>
<organism>
    <name type="scientific">Clostridium botulinum (strain Eklund 17B / Type B)</name>
    <dbReference type="NCBI Taxonomy" id="935198"/>
    <lineage>
        <taxon>Bacteria</taxon>
        <taxon>Bacillati</taxon>
        <taxon>Bacillota</taxon>
        <taxon>Clostridia</taxon>
        <taxon>Eubacteriales</taxon>
        <taxon>Clostridiaceae</taxon>
        <taxon>Clostridium</taxon>
    </lineage>
</organism>
<feature type="chain" id="PRO_1000130452" description="Global transcriptional regulator CodY">
    <location>
        <begin position="1"/>
        <end position="258"/>
    </location>
</feature>
<feature type="DNA-binding region" description="H-T-H motif" evidence="1">
    <location>
        <begin position="204"/>
        <end position="223"/>
    </location>
</feature>
<feature type="region of interest" description="GAF domain" evidence="1">
    <location>
        <begin position="1"/>
        <end position="156"/>
    </location>
</feature>
<sequence>MSSLLSKTRRLNKILQKTGTEPVAFQDICTLLSEVLECNAYIVSKRGKVLGYTFSPGFECEAMKKKVIEDKKFPEDYNLTLLESNETLANLYNQGRCVFAEIGDCKTKDKISTIIPIIGSRERLGTLILARFGKEFTDDDLVLVEYSATIVGMEMLRALQEDLADQTRKKAVVQLAIGTLSYSELEAVEHIFEELNGNEGLLVASKIADKVGITRSVIVNALRKFESAGVIESRSLGMKGTYIRVLNEKLLDELKKIK</sequence>
<name>CODY_CLOBB</name>
<reference key="1">
    <citation type="submission" date="2008-04" db="EMBL/GenBank/DDBJ databases">
        <title>Complete sequence of Clostridium botulinum strain Eklund.</title>
        <authorList>
            <person name="Brinkac L.M."/>
            <person name="Brown J.L."/>
            <person name="Bruce D."/>
            <person name="Detter C."/>
            <person name="Munk C."/>
            <person name="Smith L.A."/>
            <person name="Smith T.J."/>
            <person name="Sutton G."/>
            <person name="Brettin T.S."/>
        </authorList>
    </citation>
    <scope>NUCLEOTIDE SEQUENCE [LARGE SCALE GENOMIC DNA]</scope>
    <source>
        <strain>Eklund 17B / Type B</strain>
    </source>
</reference>